<gene>
    <name evidence="1" type="primary">rpoC</name>
    <name type="ordered locus">BLi00126</name>
    <name type="ordered locus">BL02626</name>
</gene>
<feature type="chain" id="PRO_0000225510" description="DNA-directed RNA polymerase subunit beta'">
    <location>
        <begin position="1"/>
        <end position="1199"/>
    </location>
</feature>
<feature type="binding site" evidence="1">
    <location>
        <position position="60"/>
    </location>
    <ligand>
        <name>Zn(2+)</name>
        <dbReference type="ChEBI" id="CHEBI:29105"/>
        <label>1</label>
    </ligand>
</feature>
<feature type="binding site" evidence="1">
    <location>
        <position position="62"/>
    </location>
    <ligand>
        <name>Zn(2+)</name>
        <dbReference type="ChEBI" id="CHEBI:29105"/>
        <label>1</label>
    </ligand>
</feature>
<feature type="binding site" evidence="1">
    <location>
        <position position="75"/>
    </location>
    <ligand>
        <name>Zn(2+)</name>
        <dbReference type="ChEBI" id="CHEBI:29105"/>
        <label>1</label>
    </ligand>
</feature>
<feature type="binding site" evidence="1">
    <location>
        <position position="78"/>
    </location>
    <ligand>
        <name>Zn(2+)</name>
        <dbReference type="ChEBI" id="CHEBI:29105"/>
        <label>1</label>
    </ligand>
</feature>
<feature type="binding site" evidence="1">
    <location>
        <position position="449"/>
    </location>
    <ligand>
        <name>Mg(2+)</name>
        <dbReference type="ChEBI" id="CHEBI:18420"/>
    </ligand>
</feature>
<feature type="binding site" evidence="1">
    <location>
        <position position="451"/>
    </location>
    <ligand>
        <name>Mg(2+)</name>
        <dbReference type="ChEBI" id="CHEBI:18420"/>
    </ligand>
</feature>
<feature type="binding site" evidence="1">
    <location>
        <position position="453"/>
    </location>
    <ligand>
        <name>Mg(2+)</name>
        <dbReference type="ChEBI" id="CHEBI:18420"/>
    </ligand>
</feature>
<feature type="binding site" evidence="1">
    <location>
        <position position="818"/>
    </location>
    <ligand>
        <name>Zn(2+)</name>
        <dbReference type="ChEBI" id="CHEBI:29105"/>
        <label>2</label>
    </ligand>
</feature>
<feature type="binding site" evidence="1">
    <location>
        <position position="892"/>
    </location>
    <ligand>
        <name>Zn(2+)</name>
        <dbReference type="ChEBI" id="CHEBI:29105"/>
        <label>2</label>
    </ligand>
</feature>
<feature type="binding site" evidence="1">
    <location>
        <position position="899"/>
    </location>
    <ligand>
        <name>Zn(2+)</name>
        <dbReference type="ChEBI" id="CHEBI:29105"/>
        <label>2</label>
    </ligand>
</feature>
<feature type="binding site" evidence="1">
    <location>
        <position position="902"/>
    </location>
    <ligand>
        <name>Zn(2+)</name>
        <dbReference type="ChEBI" id="CHEBI:29105"/>
        <label>2</label>
    </ligand>
</feature>
<comment type="function">
    <text evidence="1">DNA-dependent RNA polymerase catalyzes the transcription of DNA into RNA using the four ribonucleoside triphosphates as substrates.</text>
</comment>
<comment type="catalytic activity">
    <reaction evidence="1">
        <text>RNA(n) + a ribonucleoside 5'-triphosphate = RNA(n+1) + diphosphate</text>
        <dbReference type="Rhea" id="RHEA:21248"/>
        <dbReference type="Rhea" id="RHEA-COMP:14527"/>
        <dbReference type="Rhea" id="RHEA-COMP:17342"/>
        <dbReference type="ChEBI" id="CHEBI:33019"/>
        <dbReference type="ChEBI" id="CHEBI:61557"/>
        <dbReference type="ChEBI" id="CHEBI:140395"/>
        <dbReference type="EC" id="2.7.7.6"/>
    </reaction>
</comment>
<comment type="cofactor">
    <cofactor evidence="1">
        <name>Mg(2+)</name>
        <dbReference type="ChEBI" id="CHEBI:18420"/>
    </cofactor>
    <text evidence="1">Binds 1 Mg(2+) ion per subunit.</text>
</comment>
<comment type="cofactor">
    <cofactor evidence="1">
        <name>Zn(2+)</name>
        <dbReference type="ChEBI" id="CHEBI:29105"/>
    </cofactor>
    <text evidence="1">Binds 2 Zn(2+) ions per subunit.</text>
</comment>
<comment type="subunit">
    <text evidence="1">The RNAP catalytic core consists of 2 alpha, 1 beta, 1 beta' and 1 omega subunit. When a sigma factor is associated with the core the holoenzyme is formed, which can initiate transcription.</text>
</comment>
<comment type="similarity">
    <text evidence="1">Belongs to the RNA polymerase beta' chain family.</text>
</comment>
<sequence>MLDVNNFEYMNIGLASPDKIRSWSYGEVKKPETINYRTLKPEKDGLFCERIFGPQKDWECHCGKYKRVRYKGVVCDRCGVEVTRAKVRRERMGHIELAAPVSHIWYFKGIPSRMGLVLDMSPRALEEVIYFASYVVTDPANTPLEKKQLLSEKEYRAYLDKYGNKFQASMGAEAIHKLLQDIDLDKEVDMLKEELKTSQGQRRTRAIKRLEVLEAFRNSGNKPSWMILDVLPVIPPELRPMVQLDGGRFATSDLNDLYRRVINRNNRLKRLLDLGAPSIIVQNEKRMLQEAVDALIDNGRRGRPVTGPGNRPLKSLSHMLKGKQGRFRQNLLGKRVDYSGRSVIVVGPNLKMYQCGLPKEMALELFKPFVMKELVEKGLAHNIKSAKRKIERVQPEVWDVLESVIKEHPVLLNRAPTLHRLGIQAFEPTLVEGRAIRLHPLVCTAYNADFDGDQMAVHVPLSAEAQAEARILMLAAQNILNPKDGKPVVTPSQDMVLGNYYLTLERPGAVGEGMIFKDTDEALLAYQNGYVHLHTRVAVAVNSLKNETFTEEQRSKLLITTVGKLIFNEILPPSFPYMNEPTKSNIEEKTPDRFFLDYGADVKEAIKNQEINPPFKKGILGKIIAEIFKRFHITETSKMLDRMKNLGFKYSTKAGITVGVSDIVVLDDKQEILEEAQGKVDNVMKQFRRGLITEEERYERVISIWSAAKDTIQGKLMKSLDEINPIYMMSDSGARGNASNFTQLAGMRGLMANPAGRIIELPIKSSFREGLTVLEYFISTHGARKGLADTALKTADSGYLTRRLVDVAQDVIIRETDCGTDRGILAKAITEGTEVIERLEERLVGRFARKPVKHPETGEVLVNENELIDEDKAIEIVEAGIEEVWIRSAFTCNTSHGVCKRCYGRNLATGTDVEVGEAVGIIAAQSIGEPGTQLTMRTFHTGGVAGDDITQGLPRIQELFEARNPKGQATISEIDGVVAEINEVRDKQQEIVVQGEVESRSYTAPYNARLKVTEGEKISRGQVLTEGSVDPKELLKVTDITTVQEYLLHEVQKVYRMQGVEIGDKHVEVMVRQMLRKVRVIDAGDTEVLPGTLLDIHQFTEANKKVLLEGKRPATGRPVLLGITKASLETDSFLSAASFQETTRVLTDAAIKGKRDELLGLKENVIIGKLVPAGTGMLNYRKVKPVLQVQSSDEMVPAE</sequence>
<evidence type="ECO:0000255" key="1">
    <source>
        <dbReference type="HAMAP-Rule" id="MF_01322"/>
    </source>
</evidence>
<dbReference type="EC" id="2.7.7.6" evidence="1"/>
<dbReference type="EMBL" id="AE017333">
    <property type="protein sequence ID" value="AAU39100.1"/>
    <property type="molecule type" value="Genomic_DNA"/>
</dbReference>
<dbReference type="EMBL" id="CP000002">
    <property type="protein sequence ID" value="AAU21755.1"/>
    <property type="molecule type" value="Genomic_DNA"/>
</dbReference>
<dbReference type="RefSeq" id="WP_003178311.1">
    <property type="nucleotide sequence ID" value="NC_006322.1"/>
</dbReference>
<dbReference type="SMR" id="Q65PB4"/>
<dbReference type="STRING" id="279010.BL02626"/>
<dbReference type="GeneID" id="92858910"/>
<dbReference type="KEGG" id="bld:BLi00126"/>
<dbReference type="KEGG" id="bli:BL02626"/>
<dbReference type="eggNOG" id="COG0086">
    <property type="taxonomic scope" value="Bacteria"/>
</dbReference>
<dbReference type="HOGENOM" id="CLU_000524_3_1_9"/>
<dbReference type="Proteomes" id="UP000000606">
    <property type="component" value="Chromosome"/>
</dbReference>
<dbReference type="GO" id="GO:0000428">
    <property type="term" value="C:DNA-directed RNA polymerase complex"/>
    <property type="evidence" value="ECO:0007669"/>
    <property type="project" value="UniProtKB-KW"/>
</dbReference>
<dbReference type="GO" id="GO:0003677">
    <property type="term" value="F:DNA binding"/>
    <property type="evidence" value="ECO:0007669"/>
    <property type="project" value="UniProtKB-UniRule"/>
</dbReference>
<dbReference type="GO" id="GO:0003899">
    <property type="term" value="F:DNA-directed RNA polymerase activity"/>
    <property type="evidence" value="ECO:0007669"/>
    <property type="project" value="UniProtKB-UniRule"/>
</dbReference>
<dbReference type="GO" id="GO:0000287">
    <property type="term" value="F:magnesium ion binding"/>
    <property type="evidence" value="ECO:0007669"/>
    <property type="project" value="UniProtKB-UniRule"/>
</dbReference>
<dbReference type="GO" id="GO:0008270">
    <property type="term" value="F:zinc ion binding"/>
    <property type="evidence" value="ECO:0007669"/>
    <property type="project" value="UniProtKB-UniRule"/>
</dbReference>
<dbReference type="GO" id="GO:0006351">
    <property type="term" value="P:DNA-templated transcription"/>
    <property type="evidence" value="ECO:0007669"/>
    <property type="project" value="UniProtKB-UniRule"/>
</dbReference>
<dbReference type="CDD" id="cd02655">
    <property type="entry name" value="RNAP_beta'_C"/>
    <property type="match status" value="1"/>
</dbReference>
<dbReference type="CDD" id="cd01609">
    <property type="entry name" value="RNAP_beta'_N"/>
    <property type="match status" value="1"/>
</dbReference>
<dbReference type="FunFam" id="1.10.132.30:FF:000003">
    <property type="entry name" value="DNA-directed RNA polymerase subunit beta"/>
    <property type="match status" value="1"/>
</dbReference>
<dbReference type="FunFam" id="1.10.150.390:FF:000002">
    <property type="entry name" value="DNA-directed RNA polymerase subunit beta"/>
    <property type="match status" value="1"/>
</dbReference>
<dbReference type="FunFam" id="1.10.40.90:FF:000001">
    <property type="entry name" value="DNA-directed RNA polymerase subunit beta"/>
    <property type="match status" value="1"/>
</dbReference>
<dbReference type="FunFam" id="4.10.860.120:FF:000001">
    <property type="entry name" value="DNA-directed RNA polymerase subunit beta"/>
    <property type="match status" value="1"/>
</dbReference>
<dbReference type="Gene3D" id="1.10.132.30">
    <property type="match status" value="1"/>
</dbReference>
<dbReference type="Gene3D" id="1.10.150.390">
    <property type="match status" value="1"/>
</dbReference>
<dbReference type="Gene3D" id="1.10.1790.20">
    <property type="match status" value="1"/>
</dbReference>
<dbReference type="Gene3D" id="1.10.40.90">
    <property type="match status" value="1"/>
</dbReference>
<dbReference type="Gene3D" id="2.40.40.20">
    <property type="match status" value="1"/>
</dbReference>
<dbReference type="Gene3D" id="2.40.50.100">
    <property type="match status" value="1"/>
</dbReference>
<dbReference type="Gene3D" id="4.10.860.120">
    <property type="entry name" value="RNA polymerase II, clamp domain"/>
    <property type="match status" value="1"/>
</dbReference>
<dbReference type="Gene3D" id="1.10.274.100">
    <property type="entry name" value="RNA polymerase Rpb1, domain 3"/>
    <property type="match status" value="1"/>
</dbReference>
<dbReference type="HAMAP" id="MF_01322">
    <property type="entry name" value="RNApol_bact_RpoC"/>
    <property type="match status" value="1"/>
</dbReference>
<dbReference type="InterPro" id="IPR045867">
    <property type="entry name" value="DNA-dir_RpoC_beta_prime"/>
</dbReference>
<dbReference type="InterPro" id="IPR012754">
    <property type="entry name" value="DNA-dir_RpoC_beta_prime_bact"/>
</dbReference>
<dbReference type="InterPro" id="IPR000722">
    <property type="entry name" value="RNA_pol_asu"/>
</dbReference>
<dbReference type="InterPro" id="IPR006592">
    <property type="entry name" value="RNA_pol_N"/>
</dbReference>
<dbReference type="InterPro" id="IPR007080">
    <property type="entry name" value="RNA_pol_Rpb1_1"/>
</dbReference>
<dbReference type="InterPro" id="IPR007066">
    <property type="entry name" value="RNA_pol_Rpb1_3"/>
</dbReference>
<dbReference type="InterPro" id="IPR042102">
    <property type="entry name" value="RNA_pol_Rpb1_3_sf"/>
</dbReference>
<dbReference type="InterPro" id="IPR007083">
    <property type="entry name" value="RNA_pol_Rpb1_4"/>
</dbReference>
<dbReference type="InterPro" id="IPR007081">
    <property type="entry name" value="RNA_pol_Rpb1_5"/>
</dbReference>
<dbReference type="InterPro" id="IPR044893">
    <property type="entry name" value="RNA_pol_Rpb1_clamp_domain"/>
</dbReference>
<dbReference type="InterPro" id="IPR038120">
    <property type="entry name" value="Rpb1_funnel_sf"/>
</dbReference>
<dbReference type="NCBIfam" id="TIGR02386">
    <property type="entry name" value="rpoC_TIGR"/>
    <property type="match status" value="1"/>
</dbReference>
<dbReference type="PANTHER" id="PTHR19376">
    <property type="entry name" value="DNA-DIRECTED RNA POLYMERASE"/>
    <property type="match status" value="1"/>
</dbReference>
<dbReference type="PANTHER" id="PTHR19376:SF54">
    <property type="entry name" value="DNA-DIRECTED RNA POLYMERASE SUBUNIT BETA"/>
    <property type="match status" value="1"/>
</dbReference>
<dbReference type="Pfam" id="PF04997">
    <property type="entry name" value="RNA_pol_Rpb1_1"/>
    <property type="match status" value="1"/>
</dbReference>
<dbReference type="Pfam" id="PF00623">
    <property type="entry name" value="RNA_pol_Rpb1_2"/>
    <property type="match status" value="2"/>
</dbReference>
<dbReference type="Pfam" id="PF04983">
    <property type="entry name" value="RNA_pol_Rpb1_3"/>
    <property type="match status" value="1"/>
</dbReference>
<dbReference type="Pfam" id="PF05000">
    <property type="entry name" value="RNA_pol_Rpb1_4"/>
    <property type="match status" value="1"/>
</dbReference>
<dbReference type="Pfam" id="PF04998">
    <property type="entry name" value="RNA_pol_Rpb1_5"/>
    <property type="match status" value="1"/>
</dbReference>
<dbReference type="SMART" id="SM00663">
    <property type="entry name" value="RPOLA_N"/>
    <property type="match status" value="1"/>
</dbReference>
<dbReference type="SUPFAM" id="SSF64484">
    <property type="entry name" value="beta and beta-prime subunits of DNA dependent RNA-polymerase"/>
    <property type="match status" value="1"/>
</dbReference>
<accession>Q65PB4</accession>
<accession>Q62ZQ3</accession>
<name>RPOC_BACLD</name>
<protein>
    <recommendedName>
        <fullName evidence="1">DNA-directed RNA polymerase subunit beta'</fullName>
        <shortName evidence="1">RNAP subunit beta'</shortName>
        <ecNumber evidence="1">2.7.7.6</ecNumber>
    </recommendedName>
    <alternativeName>
        <fullName evidence="1">RNA polymerase subunit beta'</fullName>
    </alternativeName>
    <alternativeName>
        <fullName evidence="1">Transcriptase subunit beta'</fullName>
    </alternativeName>
</protein>
<proteinExistence type="inferred from homology"/>
<keyword id="KW-0240">DNA-directed RNA polymerase</keyword>
<keyword id="KW-0460">Magnesium</keyword>
<keyword id="KW-0479">Metal-binding</keyword>
<keyword id="KW-0548">Nucleotidyltransferase</keyword>
<keyword id="KW-1185">Reference proteome</keyword>
<keyword id="KW-0804">Transcription</keyword>
<keyword id="KW-0808">Transferase</keyword>
<keyword id="KW-0862">Zinc</keyword>
<reference key="1">
    <citation type="journal article" date="2004" name="J. Mol. Microbiol. Biotechnol.">
        <title>The complete genome sequence of Bacillus licheniformis DSM13, an organism with great industrial potential.</title>
        <authorList>
            <person name="Veith B."/>
            <person name="Herzberg C."/>
            <person name="Steckel S."/>
            <person name="Feesche J."/>
            <person name="Maurer K.H."/>
            <person name="Ehrenreich P."/>
            <person name="Baeumer S."/>
            <person name="Henne A."/>
            <person name="Liesegang H."/>
            <person name="Merkl R."/>
            <person name="Ehrenreich A."/>
            <person name="Gottschalk G."/>
        </authorList>
    </citation>
    <scope>NUCLEOTIDE SEQUENCE [LARGE SCALE GENOMIC DNA]</scope>
    <source>
        <strain>ATCC 14580 / DSM 13 / JCM 2505 / CCUG 7422 / NBRC 12200 / NCIMB 9375 / NCTC 10341 / NRRL NRS-1264 / Gibson 46</strain>
    </source>
</reference>
<reference key="2">
    <citation type="journal article" date="2004" name="Genome Biol.">
        <title>Complete genome sequence of the industrial bacterium Bacillus licheniformis and comparisons with closely related Bacillus species.</title>
        <authorList>
            <person name="Rey M.W."/>
            <person name="Ramaiya P."/>
            <person name="Nelson B.A."/>
            <person name="Brody-Karpin S.D."/>
            <person name="Zaretsky E.J."/>
            <person name="Tang M."/>
            <person name="Lopez de Leon A."/>
            <person name="Xiang H."/>
            <person name="Gusti V."/>
            <person name="Clausen I.G."/>
            <person name="Olsen P.B."/>
            <person name="Rasmussen M.D."/>
            <person name="Andersen J.T."/>
            <person name="Joergensen P.L."/>
            <person name="Larsen T.S."/>
            <person name="Sorokin A."/>
            <person name="Bolotin A."/>
            <person name="Lapidus A."/>
            <person name="Galleron N."/>
            <person name="Ehrlich S.D."/>
            <person name="Berka R.M."/>
        </authorList>
    </citation>
    <scope>NUCLEOTIDE SEQUENCE [LARGE SCALE GENOMIC DNA]</scope>
    <source>
        <strain>ATCC 14580 / DSM 13 / JCM 2505 / CCUG 7422 / NBRC 12200 / NCIMB 9375 / NCTC 10341 / NRRL NRS-1264 / Gibson 46</strain>
    </source>
</reference>
<organism>
    <name type="scientific">Bacillus licheniformis (strain ATCC 14580 / DSM 13 / JCM 2505 / CCUG 7422 / NBRC 12200 / NCIMB 9375 / NCTC 10341 / NRRL NRS-1264 / Gibson 46)</name>
    <dbReference type="NCBI Taxonomy" id="279010"/>
    <lineage>
        <taxon>Bacteria</taxon>
        <taxon>Bacillati</taxon>
        <taxon>Bacillota</taxon>
        <taxon>Bacilli</taxon>
        <taxon>Bacillales</taxon>
        <taxon>Bacillaceae</taxon>
        <taxon>Bacillus</taxon>
    </lineage>
</organism>